<name>YABP_BACSU</name>
<feature type="chain" id="PRO_0000049444" description="Spore protein YabP">
    <location>
        <begin position="1"/>
        <end position="100"/>
    </location>
</feature>
<feature type="region of interest" description="Disordered" evidence="1">
    <location>
        <begin position="1"/>
        <end position="22"/>
    </location>
</feature>
<feature type="compositionally biased region" description="Polar residues" evidence="1">
    <location>
        <begin position="1"/>
        <end position="14"/>
    </location>
</feature>
<accession>P37558</accession>
<keyword id="KW-0472">Membrane</keyword>
<keyword id="KW-1185">Reference proteome</keyword>
<keyword id="KW-0749">Sporulation</keyword>
<sequence length="100" mass="11403">MNSYYDQKGSSSVPEQHDVTMKGRKHLDISGVKHVESFDNEEFLLETVMGMLSVRGQNLQMKNLDVEKGIVSIKGRVFDLVYLDEQQGDKAKGFFSKLFK</sequence>
<gene>
    <name type="primary">yabP</name>
    <name type="ordered locus">BSU00600</name>
</gene>
<proteinExistence type="evidence at transcript level"/>
<comment type="function">
    <text evidence="2">Required for sporulation.</text>
</comment>
<comment type="subcellular location">
    <subcellularLocation>
        <location evidence="4">Forespore outer membrane</location>
    </subcellularLocation>
    <text>Forms a ring around the forespore.</text>
</comment>
<comment type="developmental stage">
    <text evidence="3">Expressed in the mother cell compartment at the second hour of sporulation.</text>
</comment>
<comment type="induction">
    <text evidence="2 3">Expression is sigma E-dependent and negatively regulated by spo0A.</text>
</comment>
<reference key="1">
    <citation type="journal article" date="1994" name="DNA Res.">
        <title>Systematic sequencing of the 180 kilobase region of the Bacillus subtilis chromosome containing the replication origin.</title>
        <authorList>
            <person name="Ogasawara N."/>
            <person name="Nakai S."/>
            <person name="Yoshikawa H."/>
        </authorList>
    </citation>
    <scope>NUCLEOTIDE SEQUENCE [GENOMIC DNA]</scope>
    <source>
        <strain>168</strain>
    </source>
</reference>
<reference key="2">
    <citation type="journal article" date="1997" name="Nature">
        <title>The complete genome sequence of the Gram-positive bacterium Bacillus subtilis.</title>
        <authorList>
            <person name="Kunst F."/>
            <person name="Ogasawara N."/>
            <person name="Moszer I."/>
            <person name="Albertini A.M."/>
            <person name="Alloni G."/>
            <person name="Azevedo V."/>
            <person name="Bertero M.G."/>
            <person name="Bessieres P."/>
            <person name="Bolotin A."/>
            <person name="Borchert S."/>
            <person name="Borriss R."/>
            <person name="Boursier L."/>
            <person name="Brans A."/>
            <person name="Braun M."/>
            <person name="Brignell S.C."/>
            <person name="Bron S."/>
            <person name="Brouillet S."/>
            <person name="Bruschi C.V."/>
            <person name="Caldwell B."/>
            <person name="Capuano V."/>
            <person name="Carter N.M."/>
            <person name="Choi S.-K."/>
            <person name="Codani J.-J."/>
            <person name="Connerton I.F."/>
            <person name="Cummings N.J."/>
            <person name="Daniel R.A."/>
            <person name="Denizot F."/>
            <person name="Devine K.M."/>
            <person name="Duesterhoeft A."/>
            <person name="Ehrlich S.D."/>
            <person name="Emmerson P.T."/>
            <person name="Entian K.-D."/>
            <person name="Errington J."/>
            <person name="Fabret C."/>
            <person name="Ferrari E."/>
            <person name="Foulger D."/>
            <person name="Fritz C."/>
            <person name="Fujita M."/>
            <person name="Fujita Y."/>
            <person name="Fuma S."/>
            <person name="Galizzi A."/>
            <person name="Galleron N."/>
            <person name="Ghim S.-Y."/>
            <person name="Glaser P."/>
            <person name="Goffeau A."/>
            <person name="Golightly E.J."/>
            <person name="Grandi G."/>
            <person name="Guiseppi G."/>
            <person name="Guy B.J."/>
            <person name="Haga K."/>
            <person name="Haiech J."/>
            <person name="Harwood C.R."/>
            <person name="Henaut A."/>
            <person name="Hilbert H."/>
            <person name="Holsappel S."/>
            <person name="Hosono S."/>
            <person name="Hullo M.-F."/>
            <person name="Itaya M."/>
            <person name="Jones L.-M."/>
            <person name="Joris B."/>
            <person name="Karamata D."/>
            <person name="Kasahara Y."/>
            <person name="Klaerr-Blanchard M."/>
            <person name="Klein C."/>
            <person name="Kobayashi Y."/>
            <person name="Koetter P."/>
            <person name="Koningstein G."/>
            <person name="Krogh S."/>
            <person name="Kumano M."/>
            <person name="Kurita K."/>
            <person name="Lapidus A."/>
            <person name="Lardinois S."/>
            <person name="Lauber J."/>
            <person name="Lazarevic V."/>
            <person name="Lee S.-M."/>
            <person name="Levine A."/>
            <person name="Liu H."/>
            <person name="Masuda S."/>
            <person name="Mauel C."/>
            <person name="Medigue C."/>
            <person name="Medina N."/>
            <person name="Mellado R.P."/>
            <person name="Mizuno M."/>
            <person name="Moestl D."/>
            <person name="Nakai S."/>
            <person name="Noback M."/>
            <person name="Noone D."/>
            <person name="O'Reilly M."/>
            <person name="Ogawa K."/>
            <person name="Ogiwara A."/>
            <person name="Oudega B."/>
            <person name="Park S.-H."/>
            <person name="Parro V."/>
            <person name="Pohl T.M."/>
            <person name="Portetelle D."/>
            <person name="Porwollik S."/>
            <person name="Prescott A.M."/>
            <person name="Presecan E."/>
            <person name="Pujic P."/>
            <person name="Purnelle B."/>
            <person name="Rapoport G."/>
            <person name="Rey M."/>
            <person name="Reynolds S."/>
            <person name="Rieger M."/>
            <person name="Rivolta C."/>
            <person name="Rocha E."/>
            <person name="Roche B."/>
            <person name="Rose M."/>
            <person name="Sadaie Y."/>
            <person name="Sato T."/>
            <person name="Scanlan E."/>
            <person name="Schleich S."/>
            <person name="Schroeter R."/>
            <person name="Scoffone F."/>
            <person name="Sekiguchi J."/>
            <person name="Sekowska A."/>
            <person name="Seror S.J."/>
            <person name="Serror P."/>
            <person name="Shin B.-S."/>
            <person name="Soldo B."/>
            <person name="Sorokin A."/>
            <person name="Tacconi E."/>
            <person name="Takagi T."/>
            <person name="Takahashi H."/>
            <person name="Takemaru K."/>
            <person name="Takeuchi M."/>
            <person name="Tamakoshi A."/>
            <person name="Tanaka T."/>
            <person name="Terpstra P."/>
            <person name="Tognoni A."/>
            <person name="Tosato V."/>
            <person name="Uchiyama S."/>
            <person name="Vandenbol M."/>
            <person name="Vannier F."/>
            <person name="Vassarotti A."/>
            <person name="Viari A."/>
            <person name="Wambutt R."/>
            <person name="Wedler E."/>
            <person name="Wedler H."/>
            <person name="Weitzenegger T."/>
            <person name="Winters P."/>
            <person name="Wipat A."/>
            <person name="Yamamoto H."/>
            <person name="Yamane K."/>
            <person name="Yasumoto K."/>
            <person name="Yata K."/>
            <person name="Yoshida K."/>
            <person name="Yoshikawa H.-F."/>
            <person name="Zumstein E."/>
            <person name="Yoshikawa H."/>
            <person name="Danchin A."/>
        </authorList>
    </citation>
    <scope>NUCLEOTIDE SEQUENCE [LARGE SCALE GENOMIC DNA]</scope>
    <source>
        <strain>168</strain>
    </source>
</reference>
<reference key="3">
    <citation type="journal article" date="2000" name="Proc. Natl. Acad. Sci. U.S.A.">
        <title>The transcriptional profile of early to middle sporulation in Bacillus subtilis.</title>
        <authorList>
            <person name="Fawcett P."/>
            <person name="Eichenberger P."/>
            <person name="Losick R."/>
            <person name="Youngman P."/>
        </authorList>
    </citation>
    <scope>FUNCTION</scope>
    <scope>INDUCTION</scope>
</reference>
<reference key="4">
    <citation type="journal article" date="2001" name="Microbiology">
        <title>The Bacillus subtilis yabQ gene is essential for formation of the spore cortex.</title>
        <authorList>
            <person name="Asai K."/>
            <person name="Takamatsu H."/>
            <person name="Iwano M."/>
            <person name="Kodama T."/>
            <person name="Watabe K."/>
            <person name="Ogasawara N."/>
        </authorList>
    </citation>
    <scope>DEVELOPMENTAL STAGE</scope>
    <scope>INDUCTION</scope>
</reference>
<reference key="5">
    <citation type="journal article" date="2004" name="J. Bacteriol.">
        <title>Dynamic patterns of subcellular protein localization during spore coat morphogenesis in Bacillus subtilis.</title>
        <authorList>
            <person name="van Ooij C."/>
            <person name="Eichenberger P."/>
            <person name="Losick R."/>
        </authorList>
    </citation>
    <scope>SUBCELLULAR LOCATION</scope>
    <source>
        <strain>168 / PY79</strain>
    </source>
</reference>
<evidence type="ECO:0000256" key="1">
    <source>
        <dbReference type="SAM" id="MobiDB-lite"/>
    </source>
</evidence>
<evidence type="ECO:0000269" key="2">
    <source>
    </source>
</evidence>
<evidence type="ECO:0000269" key="3">
    <source>
    </source>
</evidence>
<evidence type="ECO:0000269" key="4">
    <source>
    </source>
</evidence>
<organism>
    <name type="scientific">Bacillus subtilis (strain 168)</name>
    <dbReference type="NCBI Taxonomy" id="224308"/>
    <lineage>
        <taxon>Bacteria</taxon>
        <taxon>Bacillati</taxon>
        <taxon>Bacillota</taxon>
        <taxon>Bacilli</taxon>
        <taxon>Bacillales</taxon>
        <taxon>Bacillaceae</taxon>
        <taxon>Bacillus</taxon>
    </lineage>
</organism>
<protein>
    <recommendedName>
        <fullName>Spore protein YabP</fullName>
    </recommendedName>
</protein>
<dbReference type="EMBL" id="D26185">
    <property type="protein sequence ID" value="BAA05295.1"/>
    <property type="molecule type" value="Genomic_DNA"/>
</dbReference>
<dbReference type="EMBL" id="AL009126">
    <property type="protein sequence ID" value="CAB11836.1"/>
    <property type="molecule type" value="Genomic_DNA"/>
</dbReference>
<dbReference type="PIR" id="S66090">
    <property type="entry name" value="S66090"/>
</dbReference>
<dbReference type="RefSeq" id="WP_003226714.1">
    <property type="nucleotide sequence ID" value="NZ_OZ025638.1"/>
</dbReference>
<dbReference type="SMR" id="P37558"/>
<dbReference type="FunCoup" id="P37558">
    <property type="interactions" value="79"/>
</dbReference>
<dbReference type="STRING" id="224308.BSU00600"/>
<dbReference type="PaxDb" id="224308-BSU00600"/>
<dbReference type="EnsemblBacteria" id="CAB11836">
    <property type="protein sequence ID" value="CAB11836"/>
    <property type="gene ID" value="BSU_00600"/>
</dbReference>
<dbReference type="GeneID" id="86871179"/>
<dbReference type="GeneID" id="936966"/>
<dbReference type="KEGG" id="bsu:BSU00600"/>
<dbReference type="PATRIC" id="fig|224308.179.peg.60"/>
<dbReference type="eggNOG" id="ENOG5032YWW">
    <property type="taxonomic scope" value="Bacteria"/>
</dbReference>
<dbReference type="InParanoid" id="P37558"/>
<dbReference type="OrthoDB" id="9795125at2"/>
<dbReference type="PhylomeDB" id="P37558"/>
<dbReference type="BioCyc" id="BSUB:BSU00600-MONOMER"/>
<dbReference type="Proteomes" id="UP000001570">
    <property type="component" value="Chromosome"/>
</dbReference>
<dbReference type="GO" id="GO:0042601">
    <property type="term" value="C:endospore-forming forespore"/>
    <property type="evidence" value="ECO:0000314"/>
    <property type="project" value="CACAO"/>
</dbReference>
<dbReference type="GO" id="GO:0016020">
    <property type="term" value="C:membrane"/>
    <property type="evidence" value="ECO:0007669"/>
    <property type="project" value="UniProtKB-KW"/>
</dbReference>
<dbReference type="GO" id="GO:0030435">
    <property type="term" value="P:sporulation resulting in formation of a cellular spore"/>
    <property type="evidence" value="ECO:0007669"/>
    <property type="project" value="UniProtKB-KW"/>
</dbReference>
<dbReference type="Gene3D" id="2.60.40.2000">
    <property type="match status" value="1"/>
</dbReference>
<dbReference type="InterPro" id="IPR012504">
    <property type="entry name" value="Spore_YabP"/>
</dbReference>
<dbReference type="InterPro" id="IPR022476">
    <property type="entry name" value="Spore_YabP/YqfC"/>
</dbReference>
<dbReference type="InterPro" id="IPR038705">
    <property type="entry name" value="YabP_sf"/>
</dbReference>
<dbReference type="NCBIfam" id="TIGR02892">
    <property type="entry name" value="spore_yabP"/>
    <property type="match status" value="1"/>
</dbReference>
<dbReference type="Pfam" id="PF07873">
    <property type="entry name" value="YabP"/>
    <property type="match status" value="1"/>
</dbReference>
<dbReference type="PIRSF" id="PIRSF011576">
    <property type="entry name" value="YabP"/>
    <property type="match status" value="1"/>
</dbReference>